<keyword id="KW-0963">Cytoplasm</keyword>
<keyword id="KW-0227">DNA damage</keyword>
<keyword id="KW-0228">DNA excision</keyword>
<keyword id="KW-0234">DNA repair</keyword>
<keyword id="KW-0267">Excision nuclease</keyword>
<keyword id="KW-0742">SOS response</keyword>
<name>UVRC_TROW8</name>
<feature type="chain" id="PRO_0000227489" description="UvrABC system protein C">
    <location>
        <begin position="1"/>
        <end position="607"/>
    </location>
</feature>
<feature type="domain" description="GIY-YIG" evidence="1">
    <location>
        <begin position="11"/>
        <end position="89"/>
    </location>
</feature>
<feature type="domain" description="UVR" evidence="1">
    <location>
        <begin position="201"/>
        <end position="236"/>
    </location>
</feature>
<gene>
    <name evidence="1" type="primary">uvrC</name>
    <name type="ordered locus">TW475</name>
</gene>
<proteinExistence type="inferred from homology"/>
<protein>
    <recommendedName>
        <fullName evidence="1">UvrABC system protein C</fullName>
        <shortName evidence="1">Protein UvrC</shortName>
    </recommendedName>
    <alternativeName>
        <fullName evidence="1">Excinuclease ABC subunit C</fullName>
    </alternativeName>
</protein>
<evidence type="ECO:0000255" key="1">
    <source>
        <dbReference type="HAMAP-Rule" id="MF_00203"/>
    </source>
</evidence>
<comment type="function">
    <text evidence="1">The UvrABC repair system catalyzes the recognition and processing of DNA lesions. UvrC both incises the 5' and 3' sides of the lesion. The N-terminal half is responsible for the 3' incision and the C-terminal half is responsible for the 5' incision.</text>
</comment>
<comment type="subunit">
    <text evidence="1">Interacts with UvrB in an incision complex.</text>
</comment>
<comment type="subcellular location">
    <subcellularLocation>
        <location evidence="1">Cytoplasm</location>
    </subcellularLocation>
</comment>
<comment type="similarity">
    <text evidence="1">Belongs to the UvrC family.</text>
</comment>
<accession>Q83NI9</accession>
<sequence>MYPPRRIEIPCKPGVYRFEDENGRILYVGKAKNLRNRLGSYFTNARRGRRISYMLSISKKVGWTCVADDIEALRLEYSWIKEFAPPCNVKLKDDKAYPFLAVTIGEQVPRLLITRRKIQYATHFGPYPKVFHLRETVSLLHKIFQIRTCSPTNYKRAIASGMPCFEGQINKCFGPCSLKTTHLQYQKRIKNLMAFLEGQSSSLLESLKKKMLKASKNKEYEEAAILRDKIQAAQTVLSRSAVLLDETVSADFIAVVSDNSIASVQCFRVIAGRIKSVYSWHFEQQEDQSASELLSQSIIQVYDKLSLPKRIVLFDKPSYLSALSAHLNDKNIDRSLEIEIVYHPNEQERRLLETVKDNALSELERHRLRRSSDYTERHRSLFELQKYLNLNSLPVRIECFDISHLSGTNTSGSMVVFENGEPKKSAYRHFNIHIDQNNDTASMFSLICRRLRSLESVAQDSPDYPHLMIIDGGKPQLSAAVGALQEVGLKIPVFALSKRLEELWSPGVKTSLILPPNSESLFLLQKIRDESHRFALKQQTRRREAYLTSELFRIPGLGKQKVMQLLRRFSSFAEIRQASIEDISALPGFGVKTAEKIKECAEAFSLK</sequence>
<reference key="1">
    <citation type="journal article" date="2003" name="Lancet">
        <title>Sequencing and analysis of the genome of the Whipple's disease bacterium Tropheryma whipplei.</title>
        <authorList>
            <person name="Bentley S.D."/>
            <person name="Maiwald M."/>
            <person name="Murphy L.D."/>
            <person name="Pallen M.J."/>
            <person name="Yeats C.A."/>
            <person name="Dover L.G."/>
            <person name="Norbertczak H.T."/>
            <person name="Besra G.S."/>
            <person name="Quail M.A."/>
            <person name="Harris D.E."/>
            <person name="von Herbay A."/>
            <person name="Goble A."/>
            <person name="Rutter S."/>
            <person name="Squares R."/>
            <person name="Squares S."/>
            <person name="Barrell B.G."/>
            <person name="Parkhill J."/>
            <person name="Relman D.A."/>
        </authorList>
    </citation>
    <scope>NUCLEOTIDE SEQUENCE [LARGE SCALE GENOMIC DNA]</scope>
    <source>
        <strain>TW08/27</strain>
    </source>
</reference>
<organism>
    <name type="scientific">Tropheryma whipplei (strain TW08/27)</name>
    <name type="common">Whipple's bacillus</name>
    <dbReference type="NCBI Taxonomy" id="218496"/>
    <lineage>
        <taxon>Bacteria</taxon>
        <taxon>Bacillati</taxon>
        <taxon>Actinomycetota</taxon>
        <taxon>Actinomycetes</taxon>
        <taxon>Micrococcales</taxon>
        <taxon>Tropherymataceae</taxon>
        <taxon>Tropheryma</taxon>
    </lineage>
</organism>
<dbReference type="EMBL" id="BX251411">
    <property type="protein sequence ID" value="CAD67142.1"/>
    <property type="molecule type" value="Genomic_DNA"/>
</dbReference>
<dbReference type="RefSeq" id="WP_011096422.1">
    <property type="nucleotide sequence ID" value="NC_004551.1"/>
</dbReference>
<dbReference type="SMR" id="Q83NI9"/>
<dbReference type="GeneID" id="67388251"/>
<dbReference type="KEGG" id="tws:TW475"/>
<dbReference type="HOGENOM" id="CLU_014841_1_1_11"/>
<dbReference type="GO" id="GO:0005737">
    <property type="term" value="C:cytoplasm"/>
    <property type="evidence" value="ECO:0007669"/>
    <property type="project" value="UniProtKB-SubCell"/>
</dbReference>
<dbReference type="GO" id="GO:0009380">
    <property type="term" value="C:excinuclease repair complex"/>
    <property type="evidence" value="ECO:0007669"/>
    <property type="project" value="InterPro"/>
</dbReference>
<dbReference type="GO" id="GO:0003677">
    <property type="term" value="F:DNA binding"/>
    <property type="evidence" value="ECO:0007669"/>
    <property type="project" value="UniProtKB-UniRule"/>
</dbReference>
<dbReference type="GO" id="GO:0009381">
    <property type="term" value="F:excinuclease ABC activity"/>
    <property type="evidence" value="ECO:0007669"/>
    <property type="project" value="UniProtKB-UniRule"/>
</dbReference>
<dbReference type="GO" id="GO:0006289">
    <property type="term" value="P:nucleotide-excision repair"/>
    <property type="evidence" value="ECO:0007669"/>
    <property type="project" value="UniProtKB-UniRule"/>
</dbReference>
<dbReference type="GO" id="GO:0009432">
    <property type="term" value="P:SOS response"/>
    <property type="evidence" value="ECO:0007669"/>
    <property type="project" value="UniProtKB-UniRule"/>
</dbReference>
<dbReference type="CDD" id="cd10434">
    <property type="entry name" value="GIY-YIG_UvrC_Cho"/>
    <property type="match status" value="1"/>
</dbReference>
<dbReference type="FunFam" id="3.40.1440.10:FF:000001">
    <property type="entry name" value="UvrABC system protein C"/>
    <property type="match status" value="1"/>
</dbReference>
<dbReference type="Gene3D" id="1.10.150.20">
    <property type="entry name" value="5' to 3' exonuclease, C-terminal subdomain"/>
    <property type="match status" value="1"/>
</dbReference>
<dbReference type="Gene3D" id="3.40.1440.10">
    <property type="entry name" value="GIY-YIG endonuclease"/>
    <property type="match status" value="1"/>
</dbReference>
<dbReference type="Gene3D" id="4.10.860.10">
    <property type="entry name" value="UVR domain"/>
    <property type="match status" value="1"/>
</dbReference>
<dbReference type="Gene3D" id="3.30.420.340">
    <property type="entry name" value="UvrC, RNAse H endonuclease domain"/>
    <property type="match status" value="1"/>
</dbReference>
<dbReference type="HAMAP" id="MF_00203">
    <property type="entry name" value="UvrC"/>
    <property type="match status" value="1"/>
</dbReference>
<dbReference type="InterPro" id="IPR000305">
    <property type="entry name" value="GIY-YIG_endonuc"/>
</dbReference>
<dbReference type="InterPro" id="IPR035901">
    <property type="entry name" value="GIY-YIG_endonuc_sf"/>
</dbReference>
<dbReference type="InterPro" id="IPR047296">
    <property type="entry name" value="GIY-YIG_UvrC_Cho"/>
</dbReference>
<dbReference type="InterPro" id="IPR010994">
    <property type="entry name" value="RuvA_2-like"/>
</dbReference>
<dbReference type="InterPro" id="IPR001943">
    <property type="entry name" value="UVR_dom"/>
</dbReference>
<dbReference type="InterPro" id="IPR036876">
    <property type="entry name" value="UVR_dom_sf"/>
</dbReference>
<dbReference type="InterPro" id="IPR050066">
    <property type="entry name" value="UvrABC_protein_C"/>
</dbReference>
<dbReference type="InterPro" id="IPR004791">
    <property type="entry name" value="UvrC"/>
</dbReference>
<dbReference type="InterPro" id="IPR001162">
    <property type="entry name" value="UvrC_RNase_H_dom"/>
</dbReference>
<dbReference type="InterPro" id="IPR038476">
    <property type="entry name" value="UvrC_RNase_H_dom_sf"/>
</dbReference>
<dbReference type="NCBIfam" id="NF001824">
    <property type="entry name" value="PRK00558.1-5"/>
    <property type="match status" value="1"/>
</dbReference>
<dbReference type="NCBIfam" id="TIGR00194">
    <property type="entry name" value="uvrC"/>
    <property type="match status" value="1"/>
</dbReference>
<dbReference type="PANTHER" id="PTHR30562:SF1">
    <property type="entry name" value="UVRABC SYSTEM PROTEIN C"/>
    <property type="match status" value="1"/>
</dbReference>
<dbReference type="PANTHER" id="PTHR30562">
    <property type="entry name" value="UVRC/OXIDOREDUCTASE"/>
    <property type="match status" value="1"/>
</dbReference>
<dbReference type="Pfam" id="PF01541">
    <property type="entry name" value="GIY-YIG"/>
    <property type="match status" value="1"/>
</dbReference>
<dbReference type="Pfam" id="PF14520">
    <property type="entry name" value="HHH_5"/>
    <property type="match status" value="1"/>
</dbReference>
<dbReference type="Pfam" id="PF02151">
    <property type="entry name" value="UVR"/>
    <property type="match status" value="1"/>
</dbReference>
<dbReference type="Pfam" id="PF22920">
    <property type="entry name" value="UvrC_RNaseH"/>
    <property type="match status" value="1"/>
</dbReference>
<dbReference type="Pfam" id="PF08459">
    <property type="entry name" value="UvrC_RNaseH_dom"/>
    <property type="match status" value="1"/>
</dbReference>
<dbReference type="SMART" id="SM00465">
    <property type="entry name" value="GIYc"/>
    <property type="match status" value="1"/>
</dbReference>
<dbReference type="SUPFAM" id="SSF46600">
    <property type="entry name" value="C-terminal UvrC-binding domain of UvrB"/>
    <property type="match status" value="1"/>
</dbReference>
<dbReference type="SUPFAM" id="SSF82771">
    <property type="entry name" value="GIY-YIG endonuclease"/>
    <property type="match status" value="1"/>
</dbReference>
<dbReference type="SUPFAM" id="SSF47781">
    <property type="entry name" value="RuvA domain 2-like"/>
    <property type="match status" value="1"/>
</dbReference>
<dbReference type="PROSITE" id="PS50164">
    <property type="entry name" value="GIY_YIG"/>
    <property type="match status" value="1"/>
</dbReference>
<dbReference type="PROSITE" id="PS50151">
    <property type="entry name" value="UVR"/>
    <property type="match status" value="1"/>
</dbReference>
<dbReference type="PROSITE" id="PS50165">
    <property type="entry name" value="UVRC"/>
    <property type="match status" value="1"/>
</dbReference>